<keyword id="KW-0687">Ribonucleoprotein</keyword>
<keyword id="KW-0689">Ribosomal protein</keyword>
<keyword id="KW-0694">RNA-binding</keyword>
<keyword id="KW-0699">rRNA-binding</keyword>
<feature type="chain" id="PRO_1000143263" description="Small ribosomal subunit protein uS17">
    <location>
        <begin position="1"/>
        <end position="109"/>
    </location>
</feature>
<sequence>MAIGLNVTEPEGTCSDEDCPFHGNLSVRGQVLEGEVASTDMEKTVVVEREYDVFVPKYDRYMKRRSRVPAHAPECFDISVGDTVSIAETRPLSKTKSHVVVEITDGGDA</sequence>
<protein>
    <recommendedName>
        <fullName evidence="1">Small ribosomal subunit protein uS17</fullName>
    </recommendedName>
    <alternativeName>
        <fullName evidence="2">30S ribosomal protein S17</fullName>
    </alternativeName>
</protein>
<gene>
    <name evidence="1" type="primary">rps17</name>
    <name type="ordered locus">OE_3400F</name>
</gene>
<organism>
    <name type="scientific">Halobacterium salinarum (strain ATCC 29341 / DSM 671 / R1)</name>
    <dbReference type="NCBI Taxonomy" id="478009"/>
    <lineage>
        <taxon>Archaea</taxon>
        <taxon>Methanobacteriati</taxon>
        <taxon>Methanobacteriota</taxon>
        <taxon>Stenosarchaea group</taxon>
        <taxon>Halobacteria</taxon>
        <taxon>Halobacteriales</taxon>
        <taxon>Halobacteriaceae</taxon>
        <taxon>Halobacterium</taxon>
        <taxon>Halobacterium salinarum NRC-34001</taxon>
    </lineage>
</organism>
<reference key="1">
    <citation type="journal article" date="2008" name="Genomics">
        <title>Evolution in the laboratory: the genome of Halobacterium salinarum strain R1 compared to that of strain NRC-1.</title>
        <authorList>
            <person name="Pfeiffer F."/>
            <person name="Schuster S.C."/>
            <person name="Broicher A."/>
            <person name="Falb M."/>
            <person name="Palm P."/>
            <person name="Rodewald K."/>
            <person name="Ruepp A."/>
            <person name="Soppa J."/>
            <person name="Tittor J."/>
            <person name="Oesterhelt D."/>
        </authorList>
    </citation>
    <scope>NUCLEOTIDE SEQUENCE [LARGE SCALE GENOMIC DNA]</scope>
    <source>
        <strain>ATCC 29341 / DSM 671 / R1</strain>
    </source>
</reference>
<evidence type="ECO:0000255" key="1">
    <source>
        <dbReference type="HAMAP-Rule" id="MF_01345"/>
    </source>
</evidence>
<evidence type="ECO:0000305" key="2"/>
<name>RS17_HALS3</name>
<dbReference type="EMBL" id="AM774415">
    <property type="protein sequence ID" value="CAP14234.1"/>
    <property type="molecule type" value="Genomic_DNA"/>
</dbReference>
<dbReference type="RefSeq" id="WP_010903243.1">
    <property type="nucleotide sequence ID" value="NC_010364.1"/>
</dbReference>
<dbReference type="SMR" id="B0R665"/>
<dbReference type="EnsemblBacteria" id="CAP14234">
    <property type="protein sequence ID" value="CAP14234"/>
    <property type="gene ID" value="OE_3400F"/>
</dbReference>
<dbReference type="KEGG" id="hsl:OE_3400F"/>
<dbReference type="HOGENOM" id="CLU_073626_0_3_2"/>
<dbReference type="PhylomeDB" id="B0R665"/>
<dbReference type="Proteomes" id="UP000001321">
    <property type="component" value="Chromosome"/>
</dbReference>
<dbReference type="GO" id="GO:0022627">
    <property type="term" value="C:cytosolic small ribosomal subunit"/>
    <property type="evidence" value="ECO:0007669"/>
    <property type="project" value="TreeGrafter"/>
</dbReference>
<dbReference type="GO" id="GO:0019843">
    <property type="term" value="F:rRNA binding"/>
    <property type="evidence" value="ECO:0007669"/>
    <property type="project" value="UniProtKB-UniRule"/>
</dbReference>
<dbReference type="GO" id="GO:0003735">
    <property type="term" value="F:structural constituent of ribosome"/>
    <property type="evidence" value="ECO:0007669"/>
    <property type="project" value="InterPro"/>
</dbReference>
<dbReference type="GO" id="GO:0006412">
    <property type="term" value="P:translation"/>
    <property type="evidence" value="ECO:0007669"/>
    <property type="project" value="UniProtKB-UniRule"/>
</dbReference>
<dbReference type="CDD" id="cd00364">
    <property type="entry name" value="Ribosomal_uS17"/>
    <property type="match status" value="1"/>
</dbReference>
<dbReference type="FunFam" id="2.40.50.1000:FF:000005">
    <property type="entry name" value="30S ribosomal protein S17"/>
    <property type="match status" value="1"/>
</dbReference>
<dbReference type="Gene3D" id="2.40.50.1000">
    <property type="match status" value="1"/>
</dbReference>
<dbReference type="HAMAP" id="MF_01345_A">
    <property type="entry name" value="Ribosomal_uS17_A"/>
    <property type="match status" value="1"/>
</dbReference>
<dbReference type="InterPro" id="IPR012340">
    <property type="entry name" value="NA-bd_OB-fold"/>
</dbReference>
<dbReference type="InterPro" id="IPR000266">
    <property type="entry name" value="Ribosomal_uS17"/>
</dbReference>
<dbReference type="InterPro" id="IPR028333">
    <property type="entry name" value="Ribosomal_uS17_arc/euk"/>
</dbReference>
<dbReference type="InterPro" id="IPR019978">
    <property type="entry name" value="Ribosomal_uS17_archaeal"/>
</dbReference>
<dbReference type="InterPro" id="IPR019979">
    <property type="entry name" value="Ribosomal_uS17_CS"/>
</dbReference>
<dbReference type="NCBIfam" id="NF006345">
    <property type="entry name" value="PRK08572.1"/>
    <property type="match status" value="1"/>
</dbReference>
<dbReference type="NCBIfam" id="TIGR03630">
    <property type="entry name" value="uS17_arch"/>
    <property type="match status" value="1"/>
</dbReference>
<dbReference type="PANTHER" id="PTHR10744">
    <property type="entry name" value="40S RIBOSOMAL PROTEIN S11 FAMILY MEMBER"/>
    <property type="match status" value="1"/>
</dbReference>
<dbReference type="PANTHER" id="PTHR10744:SF9">
    <property type="entry name" value="40S RIBOSOMAL PROTEIN S11-RELATED"/>
    <property type="match status" value="1"/>
</dbReference>
<dbReference type="Pfam" id="PF00366">
    <property type="entry name" value="Ribosomal_S17"/>
    <property type="match status" value="1"/>
</dbReference>
<dbReference type="PRINTS" id="PR00973">
    <property type="entry name" value="RIBOSOMALS17"/>
</dbReference>
<dbReference type="SUPFAM" id="SSF50249">
    <property type="entry name" value="Nucleic acid-binding proteins"/>
    <property type="match status" value="1"/>
</dbReference>
<dbReference type="PROSITE" id="PS00056">
    <property type="entry name" value="RIBOSOMAL_S17"/>
    <property type="match status" value="1"/>
</dbReference>
<proteinExistence type="inferred from homology"/>
<accession>B0R665</accession>
<comment type="function">
    <text evidence="1">One of the primary rRNA binding proteins, it binds specifically to the 5'-end of 16S ribosomal RNA.</text>
</comment>
<comment type="subunit">
    <text evidence="1">Part of the 30S ribosomal subunit.</text>
</comment>
<comment type="similarity">
    <text evidence="1">Belongs to the universal ribosomal protein uS17 family.</text>
</comment>